<name>RR14_CHLAT</name>
<proteinExistence type="inferred from homology"/>
<evidence type="ECO:0000255" key="1">
    <source>
        <dbReference type="HAMAP-Rule" id="MF_00537"/>
    </source>
</evidence>
<evidence type="ECO:0000305" key="2"/>
<geneLocation type="chloroplast"/>
<feature type="chain" id="PRO_0000354407" description="Small ribosomal subunit protein uS14c">
    <location>
        <begin position="1"/>
        <end position="100"/>
    </location>
</feature>
<keyword id="KW-0150">Chloroplast</keyword>
<keyword id="KW-0934">Plastid</keyword>
<keyword id="KW-0687">Ribonucleoprotein</keyword>
<keyword id="KW-0689">Ribosomal protein</keyword>
<keyword id="KW-0694">RNA-binding</keyword>
<keyword id="KW-0699">rRNA-binding</keyword>
<sequence>MAKKSMIEREKKRQKLVAKYAELRKEIKEQMRLASSFEEKLNLHRKLQRLPRNSSSTRLHNRCAISGRPKAYYRDFGLSRHVFREMAHNCLLPGVTKSSW</sequence>
<protein>
    <recommendedName>
        <fullName evidence="1">Small ribosomal subunit protein uS14c</fullName>
    </recommendedName>
    <alternativeName>
        <fullName evidence="2">30S ribosomal protein S14, chloroplastic</fullName>
    </alternativeName>
</protein>
<gene>
    <name evidence="1" type="primary">rps14</name>
</gene>
<comment type="function">
    <text evidence="1">Binds 16S rRNA, required for the assembly of 30S particles.</text>
</comment>
<comment type="subunit">
    <text evidence="1">Part of the 30S ribosomal subunit.</text>
</comment>
<comment type="subcellular location">
    <subcellularLocation>
        <location>Plastid</location>
        <location>Chloroplast</location>
    </subcellularLocation>
</comment>
<comment type="similarity">
    <text evidence="1">Belongs to the universal ribosomal protein uS14 family.</text>
</comment>
<reference key="1">
    <citation type="journal article" date="2007" name="BMC Biol.">
        <title>A clade uniting the green algae Mesostigma viride and Chlorokybus atmophyticus represents the deepest branch of the Streptophyta in chloroplast genome-based phylogenies.</title>
        <authorList>
            <person name="Lemieux C."/>
            <person name="Otis C."/>
            <person name="Turmel M."/>
        </authorList>
    </citation>
    <scope>NUCLEOTIDE SEQUENCE [LARGE SCALE GENOMIC DNA]</scope>
    <source>
        <strain>SAG 48.80</strain>
    </source>
</reference>
<organism>
    <name type="scientific">Chlorokybus atmophyticus</name>
    <name type="common">Soil alga</name>
    <dbReference type="NCBI Taxonomy" id="3144"/>
    <lineage>
        <taxon>Eukaryota</taxon>
        <taxon>Viridiplantae</taxon>
        <taxon>Streptophyta</taxon>
        <taxon>Chlorokybophyceae</taxon>
        <taxon>Chlorokybales</taxon>
        <taxon>Chlorokybaceae</taxon>
        <taxon>Chlorokybus</taxon>
    </lineage>
</organism>
<dbReference type="EMBL" id="DQ422812">
    <property type="protein sequence ID" value="ABD62245.1"/>
    <property type="molecule type" value="Genomic_DNA"/>
</dbReference>
<dbReference type="RefSeq" id="YP_001019113.1">
    <property type="nucleotide sequence ID" value="NC_008822.1"/>
</dbReference>
<dbReference type="SMR" id="Q19V89"/>
<dbReference type="GeneID" id="4783233"/>
<dbReference type="GO" id="GO:0009507">
    <property type="term" value="C:chloroplast"/>
    <property type="evidence" value="ECO:0007669"/>
    <property type="project" value="UniProtKB-SubCell"/>
</dbReference>
<dbReference type="GO" id="GO:0015935">
    <property type="term" value="C:small ribosomal subunit"/>
    <property type="evidence" value="ECO:0007669"/>
    <property type="project" value="TreeGrafter"/>
</dbReference>
<dbReference type="GO" id="GO:0019843">
    <property type="term" value="F:rRNA binding"/>
    <property type="evidence" value="ECO:0007669"/>
    <property type="project" value="UniProtKB-UniRule"/>
</dbReference>
<dbReference type="GO" id="GO:0003735">
    <property type="term" value="F:structural constituent of ribosome"/>
    <property type="evidence" value="ECO:0007669"/>
    <property type="project" value="InterPro"/>
</dbReference>
<dbReference type="GO" id="GO:0006412">
    <property type="term" value="P:translation"/>
    <property type="evidence" value="ECO:0007669"/>
    <property type="project" value="UniProtKB-UniRule"/>
</dbReference>
<dbReference type="FunFam" id="1.10.287.1480:FF:000001">
    <property type="entry name" value="30S ribosomal protein S14"/>
    <property type="match status" value="1"/>
</dbReference>
<dbReference type="Gene3D" id="1.10.287.1480">
    <property type="match status" value="1"/>
</dbReference>
<dbReference type="HAMAP" id="MF_00537">
    <property type="entry name" value="Ribosomal_uS14_1"/>
    <property type="match status" value="1"/>
</dbReference>
<dbReference type="InterPro" id="IPR001209">
    <property type="entry name" value="Ribosomal_uS14"/>
</dbReference>
<dbReference type="InterPro" id="IPR023036">
    <property type="entry name" value="Ribosomal_uS14_bac/plastid"/>
</dbReference>
<dbReference type="InterPro" id="IPR018271">
    <property type="entry name" value="Ribosomal_uS14_CS"/>
</dbReference>
<dbReference type="NCBIfam" id="NF006477">
    <property type="entry name" value="PRK08881.1"/>
    <property type="match status" value="1"/>
</dbReference>
<dbReference type="PANTHER" id="PTHR19836">
    <property type="entry name" value="30S RIBOSOMAL PROTEIN S14"/>
    <property type="match status" value="1"/>
</dbReference>
<dbReference type="PANTHER" id="PTHR19836:SF19">
    <property type="entry name" value="SMALL RIBOSOMAL SUBUNIT PROTEIN US14M"/>
    <property type="match status" value="1"/>
</dbReference>
<dbReference type="Pfam" id="PF00253">
    <property type="entry name" value="Ribosomal_S14"/>
    <property type="match status" value="1"/>
</dbReference>
<dbReference type="SUPFAM" id="SSF57716">
    <property type="entry name" value="Glucocorticoid receptor-like (DNA-binding domain)"/>
    <property type="match status" value="1"/>
</dbReference>
<dbReference type="PROSITE" id="PS00527">
    <property type="entry name" value="RIBOSOMAL_S14"/>
    <property type="match status" value="1"/>
</dbReference>
<accession>Q19V89</accession>